<keyword id="KW-0687">Ribonucleoprotein</keyword>
<keyword id="KW-0689">Ribosomal protein</keyword>
<keyword id="KW-0694">RNA-binding</keyword>
<keyword id="KW-0699">rRNA-binding</keyword>
<sequence length="119" mass="12599">MIQKNTLLEVADNSGARAVLCIGLLGGRKSASIGDTVIVSTKSITPRGKVEKGKVYRAVVVRVKSPIRKSDGSVIRFSSNAVVLINDQGEPLGTRVFGPVKKLSSGSFMKIMSLAVEVL</sequence>
<name>RL14_WOLWR</name>
<reference key="1">
    <citation type="journal article" date="2009" name="Proc. Natl. Acad. Sci. U.S.A.">
        <title>The mosaic genome structure of the Wolbachia wRi strain infecting Drosophila simulans.</title>
        <authorList>
            <person name="Klasson L."/>
            <person name="Westberg J."/>
            <person name="Sapountzis P."/>
            <person name="Naeslund K."/>
            <person name="Lutnaes Y."/>
            <person name="Darby A.C."/>
            <person name="Veneti Z."/>
            <person name="Chen L."/>
            <person name="Braig H.R."/>
            <person name="Garrett R."/>
            <person name="Bourtzis K."/>
            <person name="Andersson S.G."/>
        </authorList>
    </citation>
    <scope>NUCLEOTIDE SEQUENCE [LARGE SCALE GENOMIC DNA]</scope>
    <source>
        <strain>wRi</strain>
    </source>
</reference>
<evidence type="ECO:0000255" key="1">
    <source>
        <dbReference type="HAMAP-Rule" id="MF_01367"/>
    </source>
</evidence>
<evidence type="ECO:0000305" key="2"/>
<dbReference type="EMBL" id="CP001391">
    <property type="protein sequence ID" value="ACN95291.1"/>
    <property type="molecule type" value="Genomic_DNA"/>
</dbReference>
<dbReference type="RefSeq" id="WP_006279348.1">
    <property type="nucleotide sequence ID" value="NZ_MKIF01000201.1"/>
</dbReference>
<dbReference type="SMR" id="C0R2Z9"/>
<dbReference type="STRING" id="66084.WRi_005090"/>
<dbReference type="GeneID" id="70036154"/>
<dbReference type="KEGG" id="wri:WRi_005090"/>
<dbReference type="HOGENOM" id="CLU_095071_2_2_5"/>
<dbReference type="Proteomes" id="UP000001293">
    <property type="component" value="Chromosome"/>
</dbReference>
<dbReference type="GO" id="GO:0022625">
    <property type="term" value="C:cytosolic large ribosomal subunit"/>
    <property type="evidence" value="ECO:0007669"/>
    <property type="project" value="TreeGrafter"/>
</dbReference>
<dbReference type="GO" id="GO:0070180">
    <property type="term" value="F:large ribosomal subunit rRNA binding"/>
    <property type="evidence" value="ECO:0007669"/>
    <property type="project" value="TreeGrafter"/>
</dbReference>
<dbReference type="GO" id="GO:0003735">
    <property type="term" value="F:structural constituent of ribosome"/>
    <property type="evidence" value="ECO:0007669"/>
    <property type="project" value="InterPro"/>
</dbReference>
<dbReference type="GO" id="GO:0006412">
    <property type="term" value="P:translation"/>
    <property type="evidence" value="ECO:0007669"/>
    <property type="project" value="UniProtKB-UniRule"/>
</dbReference>
<dbReference type="CDD" id="cd00337">
    <property type="entry name" value="Ribosomal_uL14"/>
    <property type="match status" value="1"/>
</dbReference>
<dbReference type="Gene3D" id="2.40.150.20">
    <property type="entry name" value="Ribosomal protein L14"/>
    <property type="match status" value="1"/>
</dbReference>
<dbReference type="HAMAP" id="MF_01367">
    <property type="entry name" value="Ribosomal_uL14"/>
    <property type="match status" value="1"/>
</dbReference>
<dbReference type="InterPro" id="IPR000218">
    <property type="entry name" value="Ribosomal_uL14"/>
</dbReference>
<dbReference type="InterPro" id="IPR005745">
    <property type="entry name" value="Ribosomal_uL14_bac-type"/>
</dbReference>
<dbReference type="InterPro" id="IPR019972">
    <property type="entry name" value="Ribosomal_uL14_CS"/>
</dbReference>
<dbReference type="InterPro" id="IPR036853">
    <property type="entry name" value="Ribosomal_uL14_sf"/>
</dbReference>
<dbReference type="NCBIfam" id="TIGR01067">
    <property type="entry name" value="rplN_bact"/>
    <property type="match status" value="1"/>
</dbReference>
<dbReference type="PANTHER" id="PTHR11761">
    <property type="entry name" value="50S/60S RIBOSOMAL PROTEIN L14/L23"/>
    <property type="match status" value="1"/>
</dbReference>
<dbReference type="PANTHER" id="PTHR11761:SF3">
    <property type="entry name" value="LARGE RIBOSOMAL SUBUNIT PROTEIN UL14M"/>
    <property type="match status" value="1"/>
</dbReference>
<dbReference type="Pfam" id="PF00238">
    <property type="entry name" value="Ribosomal_L14"/>
    <property type="match status" value="1"/>
</dbReference>
<dbReference type="SMART" id="SM01374">
    <property type="entry name" value="Ribosomal_L14"/>
    <property type="match status" value="1"/>
</dbReference>
<dbReference type="SUPFAM" id="SSF50193">
    <property type="entry name" value="Ribosomal protein L14"/>
    <property type="match status" value="1"/>
</dbReference>
<dbReference type="PROSITE" id="PS00049">
    <property type="entry name" value="RIBOSOMAL_L14"/>
    <property type="match status" value="1"/>
</dbReference>
<accession>C0R2Z9</accession>
<organism>
    <name type="scientific">Wolbachia sp. subsp. Drosophila simulans (strain wRi)</name>
    <dbReference type="NCBI Taxonomy" id="66084"/>
    <lineage>
        <taxon>Bacteria</taxon>
        <taxon>Pseudomonadati</taxon>
        <taxon>Pseudomonadota</taxon>
        <taxon>Alphaproteobacteria</taxon>
        <taxon>Rickettsiales</taxon>
        <taxon>Anaplasmataceae</taxon>
        <taxon>Wolbachieae</taxon>
        <taxon>Wolbachia</taxon>
    </lineage>
</organism>
<comment type="function">
    <text evidence="1">Binds to 23S rRNA. Forms part of two intersubunit bridges in the 70S ribosome.</text>
</comment>
<comment type="subunit">
    <text evidence="1">Part of the 50S ribosomal subunit. Forms a cluster with proteins L3 and L19. In the 70S ribosome, L14 and L19 interact and together make contacts with the 16S rRNA in bridges B5 and B8.</text>
</comment>
<comment type="similarity">
    <text evidence="1">Belongs to the universal ribosomal protein uL14 family.</text>
</comment>
<proteinExistence type="inferred from homology"/>
<gene>
    <name evidence="1" type="primary">rplN</name>
    <name type="ordered locus">WRi_005090</name>
</gene>
<protein>
    <recommendedName>
        <fullName evidence="1">Large ribosomal subunit protein uL14</fullName>
    </recommendedName>
    <alternativeName>
        <fullName evidence="2">50S ribosomal protein L14</fullName>
    </alternativeName>
</protein>
<feature type="chain" id="PRO_1000166949" description="Large ribosomal subunit protein uL14">
    <location>
        <begin position="1"/>
        <end position="119"/>
    </location>
</feature>